<name>PSBD_CYACA</name>
<reference key="1">
    <citation type="journal article" date="2000" name="J. Mol. Evol.">
        <title>The structure and gene repertoire of an ancient red algal plastid genome.</title>
        <authorList>
            <person name="Gloeckner G."/>
            <person name="Rosenthal A."/>
            <person name="Valentin K.-U."/>
        </authorList>
    </citation>
    <scope>NUCLEOTIDE SEQUENCE [LARGE SCALE GENOMIC DNA]</scope>
    <source>
        <strain>RK-1</strain>
    </source>
</reference>
<geneLocation type="chloroplast"/>
<proteinExistence type="evidence at protein level"/>
<organism>
    <name type="scientific">Cyanidium caldarium</name>
    <name type="common">Red alga</name>
    <dbReference type="NCBI Taxonomy" id="2771"/>
    <lineage>
        <taxon>Eukaryota</taxon>
        <taxon>Rhodophyta</taxon>
        <taxon>Bangiophyceae</taxon>
        <taxon>Cyanidiales</taxon>
        <taxon>Cyanidiaceae</taxon>
        <taxon>Cyanidium</taxon>
    </lineage>
</organism>
<protein>
    <recommendedName>
        <fullName evidence="1">Photosystem II D2 protein</fullName>
        <shortName evidence="1">PSII D2 protein</shortName>
        <ecNumber evidence="1">1.10.3.9</ecNumber>
    </recommendedName>
    <alternativeName>
        <fullName evidence="1">Photosystem Q(A) protein</fullName>
    </alternativeName>
</protein>
<keyword id="KW-0002">3D-structure</keyword>
<keyword id="KW-0148">Chlorophyll</keyword>
<keyword id="KW-0150">Chloroplast</keyword>
<keyword id="KW-0157">Chromophore</keyword>
<keyword id="KW-0249">Electron transport</keyword>
<keyword id="KW-0408">Iron</keyword>
<keyword id="KW-0460">Magnesium</keyword>
<keyword id="KW-0472">Membrane</keyword>
<keyword id="KW-0479">Metal-binding</keyword>
<keyword id="KW-0560">Oxidoreductase</keyword>
<keyword id="KW-0602">Photosynthesis</keyword>
<keyword id="KW-0604">Photosystem II</keyword>
<keyword id="KW-0934">Plastid</keyword>
<keyword id="KW-0793">Thylakoid</keyword>
<keyword id="KW-0812">Transmembrane</keyword>
<keyword id="KW-1133">Transmembrane helix</keyword>
<keyword id="KW-0813">Transport</keyword>
<dbReference type="EC" id="1.10.3.9" evidence="1"/>
<dbReference type="EMBL" id="AF022186">
    <property type="protein sequence ID" value="AAF13026.1"/>
    <property type="molecule type" value="Genomic_DNA"/>
</dbReference>
<dbReference type="RefSeq" id="NP_045019.1">
    <property type="nucleotide sequence ID" value="NC_001840.1"/>
</dbReference>
<dbReference type="PDB" id="4YUU">
    <property type="method" value="X-ray"/>
    <property type="resolution" value="2.77 A"/>
    <property type="chains" value="D1/D2/d1/d2=1-351"/>
</dbReference>
<dbReference type="PDBsum" id="4YUU"/>
<dbReference type="SMR" id="Q9TM47"/>
<dbReference type="GeneID" id="800240"/>
<dbReference type="GO" id="GO:0009535">
    <property type="term" value="C:chloroplast thylakoid membrane"/>
    <property type="evidence" value="ECO:0007669"/>
    <property type="project" value="UniProtKB-SubCell"/>
</dbReference>
<dbReference type="GO" id="GO:0009523">
    <property type="term" value="C:photosystem II"/>
    <property type="evidence" value="ECO:0007669"/>
    <property type="project" value="UniProtKB-KW"/>
</dbReference>
<dbReference type="GO" id="GO:0016168">
    <property type="term" value="F:chlorophyll binding"/>
    <property type="evidence" value="ECO:0007669"/>
    <property type="project" value="UniProtKB-UniRule"/>
</dbReference>
<dbReference type="GO" id="GO:0045156">
    <property type="term" value="F:electron transporter, transferring electrons within the cyclic electron transport pathway of photosynthesis activity"/>
    <property type="evidence" value="ECO:0007669"/>
    <property type="project" value="InterPro"/>
</dbReference>
<dbReference type="GO" id="GO:0005506">
    <property type="term" value="F:iron ion binding"/>
    <property type="evidence" value="ECO:0007669"/>
    <property type="project" value="UniProtKB-UniRule"/>
</dbReference>
<dbReference type="GO" id="GO:0016491">
    <property type="term" value="F:oxidoreductase activity"/>
    <property type="evidence" value="ECO:0007669"/>
    <property type="project" value="UniProtKB-KW"/>
</dbReference>
<dbReference type="GO" id="GO:0009772">
    <property type="term" value="P:photosynthetic electron transport in photosystem II"/>
    <property type="evidence" value="ECO:0007669"/>
    <property type="project" value="InterPro"/>
</dbReference>
<dbReference type="CDD" id="cd09288">
    <property type="entry name" value="Photosystem-II_D2"/>
    <property type="match status" value="1"/>
</dbReference>
<dbReference type="FunFam" id="1.20.85.10:FF:000001">
    <property type="entry name" value="photosystem II D2 protein-like"/>
    <property type="match status" value="1"/>
</dbReference>
<dbReference type="Gene3D" id="1.20.85.10">
    <property type="entry name" value="Photosystem II protein D1-like"/>
    <property type="match status" value="1"/>
</dbReference>
<dbReference type="HAMAP" id="MF_01383">
    <property type="entry name" value="PSII_PsbD_D2"/>
    <property type="match status" value="1"/>
</dbReference>
<dbReference type="InterPro" id="IPR055266">
    <property type="entry name" value="D1/D2"/>
</dbReference>
<dbReference type="InterPro" id="IPR036854">
    <property type="entry name" value="Photo_II_D1/D2_sf"/>
</dbReference>
<dbReference type="InterPro" id="IPR000484">
    <property type="entry name" value="Photo_RC_L/M"/>
</dbReference>
<dbReference type="InterPro" id="IPR055265">
    <property type="entry name" value="Photo_RC_L/M_CS"/>
</dbReference>
<dbReference type="InterPro" id="IPR005868">
    <property type="entry name" value="PSII_PsbD/D2"/>
</dbReference>
<dbReference type="NCBIfam" id="TIGR01152">
    <property type="entry name" value="psbD"/>
    <property type="match status" value="1"/>
</dbReference>
<dbReference type="PANTHER" id="PTHR33149:SF12">
    <property type="entry name" value="PHOTOSYSTEM II D2 PROTEIN"/>
    <property type="match status" value="1"/>
</dbReference>
<dbReference type="PANTHER" id="PTHR33149">
    <property type="entry name" value="PHOTOSYSTEM II PROTEIN D1"/>
    <property type="match status" value="1"/>
</dbReference>
<dbReference type="Pfam" id="PF00124">
    <property type="entry name" value="Photo_RC"/>
    <property type="match status" value="1"/>
</dbReference>
<dbReference type="PRINTS" id="PR00256">
    <property type="entry name" value="REACTNCENTRE"/>
</dbReference>
<dbReference type="SUPFAM" id="SSF81483">
    <property type="entry name" value="Bacterial photosystem II reaction centre, L and M subunits"/>
    <property type="match status" value="1"/>
</dbReference>
<dbReference type="PROSITE" id="PS00244">
    <property type="entry name" value="REACTION_CENTER"/>
    <property type="match status" value="1"/>
</dbReference>
<evidence type="ECO:0000255" key="1">
    <source>
        <dbReference type="HAMAP-Rule" id="MF_01383"/>
    </source>
</evidence>
<evidence type="ECO:0000305" key="2"/>
<feature type="chain" id="PRO_0000090501" description="Photosystem II D2 protein">
    <location>
        <begin position="1"/>
        <end position="351"/>
    </location>
</feature>
<feature type="transmembrane region" description="Helical" evidence="1">
    <location>
        <begin position="39"/>
        <end position="59"/>
    </location>
</feature>
<feature type="transmembrane region" description="Helical" evidence="1">
    <location>
        <begin position="123"/>
        <end position="139"/>
    </location>
</feature>
<feature type="transmembrane region" description="Helical" evidence="1">
    <location>
        <begin position="151"/>
        <end position="164"/>
    </location>
</feature>
<feature type="transmembrane region" description="Helical" evidence="1">
    <location>
        <begin position="206"/>
        <end position="226"/>
    </location>
</feature>
<feature type="transmembrane region" description="Helical" evidence="1">
    <location>
        <begin position="277"/>
        <end position="293"/>
    </location>
</feature>
<feature type="binding site" description="axial binding residue" evidence="1">
    <location>
        <position position="116"/>
    </location>
    <ligand>
        <name>chlorophyll a</name>
        <dbReference type="ChEBI" id="CHEBI:58416"/>
        <label>ChlzD2</label>
    </ligand>
    <ligandPart>
        <name>Mg</name>
        <dbReference type="ChEBI" id="CHEBI:25107"/>
    </ligandPart>
</feature>
<feature type="binding site" evidence="1">
    <location>
        <position position="128"/>
    </location>
    <ligand>
        <name>pheophytin a</name>
        <dbReference type="ChEBI" id="CHEBI:136840"/>
        <label>D2</label>
    </ligand>
</feature>
<feature type="binding site" evidence="1">
    <location>
        <position position="141"/>
    </location>
    <ligand>
        <name>pheophytin a</name>
        <dbReference type="ChEBI" id="CHEBI:136840"/>
        <label>D2</label>
    </ligand>
</feature>
<feature type="binding site" description="axial binding residue" evidence="1">
    <location>
        <position position="196"/>
    </location>
    <ligand>
        <name>chlorophyll a</name>
        <dbReference type="ChEBI" id="CHEBI:58416"/>
        <label>PD2</label>
    </ligand>
    <ligandPart>
        <name>Mg</name>
        <dbReference type="ChEBI" id="CHEBI:25107"/>
    </ligandPart>
</feature>
<feature type="binding site" evidence="1">
    <location>
        <position position="213"/>
    </location>
    <ligand>
        <name>a plastoquinone</name>
        <dbReference type="ChEBI" id="CHEBI:17757"/>
        <label>Q(A)</label>
    </ligand>
</feature>
<feature type="binding site" evidence="1">
    <location>
        <position position="213"/>
    </location>
    <ligand>
        <name>Fe cation</name>
        <dbReference type="ChEBI" id="CHEBI:24875"/>
        <note>ligand shared with heterodimeric partner</note>
    </ligand>
</feature>
<feature type="binding site" evidence="1">
    <location>
        <position position="260"/>
    </location>
    <ligand>
        <name>a plastoquinone</name>
        <dbReference type="ChEBI" id="CHEBI:17757"/>
        <label>Q(A)</label>
    </ligand>
</feature>
<feature type="binding site" evidence="1">
    <location>
        <position position="267"/>
    </location>
    <ligand>
        <name>Fe cation</name>
        <dbReference type="ChEBI" id="CHEBI:24875"/>
        <note>ligand shared with heterodimeric partner</note>
    </ligand>
</feature>
<accession>Q9TM47</accession>
<sequence length="351" mass="39315">MTIAIGREQERGWFDLLDDWLKRDRFVFIGWSGILLFPCAYLALGAWFTGTTFVSSWYTHGLASSYLEGCNFLTAAVSSPANSMGHSLLFLWGPEAQGDFTRWCQIGGLWTFTALHGSFGLIGFCLRQFEIARLVGLRPYNAIAFSGPIAVFVSVFLLYPLGQASWFFAPSFGVAAIFRFLLFLQGFHNWTLNPFHMMGVAGILGGALLCAIHGATVENTLFEDGEASDTFRAFTPTQSEETYSMVTANRFWSQIFGVAFANKRWLHFFLLFVPVTGLWVSSIGIVGLALNLRAYDFVSQEIRAAEDPEFETFYTKNILLNEGIRAWMAAQDQPHENFVFPEEVLPRGNAL</sequence>
<gene>
    <name evidence="1" type="primary">psbD</name>
</gene>
<comment type="function">
    <text evidence="1">Photosystem II (PSII) is a light-driven water:plastoquinone oxidoreductase that uses light energy to abstract electrons from H(2)O, generating O(2) and a proton gradient subsequently used for ATP formation. It consists of a core antenna complex that captures photons, and an electron transfer chain that converts photonic excitation into a charge separation. The D1/D2 (PsbA/PsbD) reaction center heterodimer binds P680, the primary electron donor of PSII as well as several subsequent electron acceptors. D2 is needed for assembly of a stable PSII complex.</text>
</comment>
<comment type="catalytic activity">
    <reaction evidence="1">
        <text>2 a plastoquinone + 4 hnu + 2 H2O = 2 a plastoquinol + O2</text>
        <dbReference type="Rhea" id="RHEA:36359"/>
        <dbReference type="Rhea" id="RHEA-COMP:9561"/>
        <dbReference type="Rhea" id="RHEA-COMP:9562"/>
        <dbReference type="ChEBI" id="CHEBI:15377"/>
        <dbReference type="ChEBI" id="CHEBI:15379"/>
        <dbReference type="ChEBI" id="CHEBI:17757"/>
        <dbReference type="ChEBI" id="CHEBI:30212"/>
        <dbReference type="ChEBI" id="CHEBI:62192"/>
        <dbReference type="EC" id="1.10.3.9"/>
    </reaction>
</comment>
<comment type="cofactor">
    <text evidence="1">The D1/D2 heterodimer binds P680, chlorophylls that are the primary electron donor of PSII, and subsequent electron acceptors. It shares a non-heme iron and each subunit binds pheophytin, quinone, additional chlorophylls, carotenoids and lipids. There is also a Cl(-1) ion associated with D1 and D2, which is required for oxygen evolution. The PSII complex binds additional chlorophylls, carotenoids and specific lipids.</text>
</comment>
<comment type="subunit">
    <text evidence="2">PSII is composed of 1 copy each of membrane proteins PsbA, PsbB, PsbC, PsbD, PsbE, PsbF, PsbH, PsbI, PsbJ, PsbK, PsbL, PsbM, PsbT, PsbY, PsbZ, Psb30/Ycf12, at least 3 peripheral proteins of the oxygen-evolving complex and a large number of cofactors. It forms dimeric complexes.</text>
</comment>
<comment type="subcellular location">
    <subcellularLocation>
        <location evidence="1">Plastid</location>
        <location evidence="1">Chloroplast thylakoid membrane</location>
        <topology evidence="1">Multi-pass membrane protein</topology>
    </subcellularLocation>
</comment>
<comment type="miscellaneous">
    <text evidence="1">2 of the reaction center chlorophylls (ChlD1 and ChlD2) are entirely coordinated by water.</text>
</comment>
<comment type="similarity">
    <text evidence="1">Belongs to the reaction center PufL/M/PsbA/D family.</text>
</comment>